<feature type="chain" id="PRO_0000136228" description="Histidine--tRNA ligase">
    <location>
        <begin position="1"/>
        <end position="429"/>
    </location>
</feature>
<sequence length="429" mass="47803">MSKSLQAIRGMNDILPEQTPLWRHFEGTVSRLLDNYGYRQIRMPIVEFTELFKRSIGEVTDIVEKEMYTFADRNGDSLTLRPEGTAACVRAVLEHGITGGGQVQKLWYIGPMFRHERPQKGRYRQFHQIGVEVFNLDGPDIDAELIVMTWRLWGMLGIRNAVKLELNSLGTSEARARYRDALVEFLSARLDQLDEDNQRRLKTNPLRVLDTKHPETQAVLVDAPKLADYLDDESRVHFEGLKARLDAAGIPYVINPKLVRGLDYYSKTVFEWVTDQLGAQGTVCAGGRYDGLVEQMGGKPTTGVGFAMGIERLVLLLETLGQVPEEIARQVDVYLCAFGEAAELAALALTEKVRDQLPSLRLQVNAGAGSFKSQFKKADKSGALYALILGEEELAAKVIGVKPLRGQGEQQNIAWDALSEHLASCVVQG</sequence>
<evidence type="ECO:0000255" key="1">
    <source>
        <dbReference type="HAMAP-Rule" id="MF_00127"/>
    </source>
</evidence>
<comment type="catalytic activity">
    <reaction evidence="1">
        <text>tRNA(His) + L-histidine + ATP = L-histidyl-tRNA(His) + AMP + diphosphate + H(+)</text>
        <dbReference type="Rhea" id="RHEA:17313"/>
        <dbReference type="Rhea" id="RHEA-COMP:9665"/>
        <dbReference type="Rhea" id="RHEA-COMP:9689"/>
        <dbReference type="ChEBI" id="CHEBI:15378"/>
        <dbReference type="ChEBI" id="CHEBI:30616"/>
        <dbReference type="ChEBI" id="CHEBI:33019"/>
        <dbReference type="ChEBI" id="CHEBI:57595"/>
        <dbReference type="ChEBI" id="CHEBI:78442"/>
        <dbReference type="ChEBI" id="CHEBI:78527"/>
        <dbReference type="ChEBI" id="CHEBI:456215"/>
        <dbReference type="EC" id="6.1.1.21"/>
    </reaction>
</comment>
<comment type="subunit">
    <text evidence="1">Homodimer.</text>
</comment>
<comment type="subcellular location">
    <subcellularLocation>
        <location evidence="1">Cytoplasm</location>
    </subcellularLocation>
</comment>
<comment type="similarity">
    <text evidence="1">Belongs to the class-II aminoacyl-tRNA synthetase family.</text>
</comment>
<name>SYH_PSE14</name>
<keyword id="KW-0030">Aminoacyl-tRNA synthetase</keyword>
<keyword id="KW-0067">ATP-binding</keyword>
<keyword id="KW-0963">Cytoplasm</keyword>
<keyword id="KW-0436">Ligase</keyword>
<keyword id="KW-0547">Nucleotide-binding</keyword>
<keyword id="KW-0648">Protein biosynthesis</keyword>
<organism>
    <name type="scientific">Pseudomonas savastanoi pv. phaseolicola (strain 1448A / Race 6)</name>
    <name type="common">Pseudomonas syringae pv. phaseolicola (strain 1448A / Race 6)</name>
    <dbReference type="NCBI Taxonomy" id="264730"/>
    <lineage>
        <taxon>Bacteria</taxon>
        <taxon>Pseudomonadati</taxon>
        <taxon>Pseudomonadota</taxon>
        <taxon>Gammaproteobacteria</taxon>
        <taxon>Pseudomonadales</taxon>
        <taxon>Pseudomonadaceae</taxon>
        <taxon>Pseudomonas</taxon>
    </lineage>
</organism>
<accession>Q48LZ3</accession>
<protein>
    <recommendedName>
        <fullName evidence="1">Histidine--tRNA ligase</fullName>
        <ecNumber evidence="1">6.1.1.21</ecNumber>
    </recommendedName>
    <alternativeName>
        <fullName evidence="1">Histidyl-tRNA synthetase</fullName>
        <shortName evidence="1">HisRS</shortName>
    </alternativeName>
</protein>
<dbReference type="EC" id="6.1.1.21" evidence="1"/>
<dbReference type="EMBL" id="CP000058">
    <property type="protein sequence ID" value="AAZ35685.1"/>
    <property type="molecule type" value="Genomic_DNA"/>
</dbReference>
<dbReference type="RefSeq" id="WP_004656276.1">
    <property type="nucleotide sequence ID" value="NC_005773.3"/>
</dbReference>
<dbReference type="SMR" id="Q48LZ3"/>
<dbReference type="KEGG" id="psp:PSPPH_1321"/>
<dbReference type="eggNOG" id="COG0124">
    <property type="taxonomic scope" value="Bacteria"/>
</dbReference>
<dbReference type="HOGENOM" id="CLU_025113_1_1_6"/>
<dbReference type="Proteomes" id="UP000000551">
    <property type="component" value="Chromosome"/>
</dbReference>
<dbReference type="GO" id="GO:0005737">
    <property type="term" value="C:cytoplasm"/>
    <property type="evidence" value="ECO:0007669"/>
    <property type="project" value="UniProtKB-SubCell"/>
</dbReference>
<dbReference type="GO" id="GO:0005524">
    <property type="term" value="F:ATP binding"/>
    <property type="evidence" value="ECO:0007669"/>
    <property type="project" value="UniProtKB-UniRule"/>
</dbReference>
<dbReference type="GO" id="GO:0004821">
    <property type="term" value="F:histidine-tRNA ligase activity"/>
    <property type="evidence" value="ECO:0007669"/>
    <property type="project" value="UniProtKB-UniRule"/>
</dbReference>
<dbReference type="GO" id="GO:0006427">
    <property type="term" value="P:histidyl-tRNA aminoacylation"/>
    <property type="evidence" value="ECO:0007669"/>
    <property type="project" value="UniProtKB-UniRule"/>
</dbReference>
<dbReference type="CDD" id="cd00773">
    <property type="entry name" value="HisRS-like_core"/>
    <property type="match status" value="1"/>
</dbReference>
<dbReference type="FunFam" id="3.30.930.10:FF:000005">
    <property type="entry name" value="Histidine--tRNA ligase"/>
    <property type="match status" value="1"/>
</dbReference>
<dbReference type="Gene3D" id="3.40.50.800">
    <property type="entry name" value="Anticodon-binding domain"/>
    <property type="match status" value="1"/>
</dbReference>
<dbReference type="Gene3D" id="3.30.930.10">
    <property type="entry name" value="Bira Bifunctional Protein, Domain 2"/>
    <property type="match status" value="1"/>
</dbReference>
<dbReference type="HAMAP" id="MF_00127">
    <property type="entry name" value="His_tRNA_synth"/>
    <property type="match status" value="1"/>
</dbReference>
<dbReference type="InterPro" id="IPR006195">
    <property type="entry name" value="aa-tRNA-synth_II"/>
</dbReference>
<dbReference type="InterPro" id="IPR045864">
    <property type="entry name" value="aa-tRNA-synth_II/BPL/LPL"/>
</dbReference>
<dbReference type="InterPro" id="IPR004154">
    <property type="entry name" value="Anticodon-bd"/>
</dbReference>
<dbReference type="InterPro" id="IPR036621">
    <property type="entry name" value="Anticodon-bd_dom_sf"/>
</dbReference>
<dbReference type="InterPro" id="IPR015807">
    <property type="entry name" value="His-tRNA-ligase"/>
</dbReference>
<dbReference type="InterPro" id="IPR041715">
    <property type="entry name" value="HisRS-like_core"/>
</dbReference>
<dbReference type="InterPro" id="IPR004516">
    <property type="entry name" value="HisRS/HisZ"/>
</dbReference>
<dbReference type="NCBIfam" id="TIGR00442">
    <property type="entry name" value="hisS"/>
    <property type="match status" value="1"/>
</dbReference>
<dbReference type="PANTHER" id="PTHR43707:SF1">
    <property type="entry name" value="HISTIDINE--TRNA LIGASE, MITOCHONDRIAL-RELATED"/>
    <property type="match status" value="1"/>
</dbReference>
<dbReference type="PANTHER" id="PTHR43707">
    <property type="entry name" value="HISTIDYL-TRNA SYNTHETASE"/>
    <property type="match status" value="1"/>
</dbReference>
<dbReference type="Pfam" id="PF03129">
    <property type="entry name" value="HGTP_anticodon"/>
    <property type="match status" value="1"/>
</dbReference>
<dbReference type="Pfam" id="PF13393">
    <property type="entry name" value="tRNA-synt_His"/>
    <property type="match status" value="1"/>
</dbReference>
<dbReference type="PIRSF" id="PIRSF001549">
    <property type="entry name" value="His-tRNA_synth"/>
    <property type="match status" value="1"/>
</dbReference>
<dbReference type="SUPFAM" id="SSF52954">
    <property type="entry name" value="Class II aaRS ABD-related"/>
    <property type="match status" value="1"/>
</dbReference>
<dbReference type="SUPFAM" id="SSF55681">
    <property type="entry name" value="Class II aaRS and biotin synthetases"/>
    <property type="match status" value="1"/>
</dbReference>
<dbReference type="PROSITE" id="PS50862">
    <property type="entry name" value="AA_TRNA_LIGASE_II"/>
    <property type="match status" value="1"/>
</dbReference>
<reference key="1">
    <citation type="journal article" date="2005" name="J. Bacteriol.">
        <title>Whole-genome sequence analysis of Pseudomonas syringae pv. phaseolicola 1448A reveals divergence among pathovars in genes involved in virulence and transposition.</title>
        <authorList>
            <person name="Joardar V."/>
            <person name="Lindeberg M."/>
            <person name="Jackson R.W."/>
            <person name="Selengut J."/>
            <person name="Dodson R."/>
            <person name="Brinkac L.M."/>
            <person name="Daugherty S.C."/>
            <person name="DeBoy R.T."/>
            <person name="Durkin A.S."/>
            <person name="Gwinn Giglio M."/>
            <person name="Madupu R."/>
            <person name="Nelson W.C."/>
            <person name="Rosovitz M.J."/>
            <person name="Sullivan S.A."/>
            <person name="Crabtree J."/>
            <person name="Creasy T."/>
            <person name="Davidsen T.M."/>
            <person name="Haft D.H."/>
            <person name="Zafar N."/>
            <person name="Zhou L."/>
            <person name="Halpin R."/>
            <person name="Holley T."/>
            <person name="Khouri H.M."/>
            <person name="Feldblyum T.V."/>
            <person name="White O."/>
            <person name="Fraser C.M."/>
            <person name="Chatterjee A.K."/>
            <person name="Cartinhour S."/>
            <person name="Schneider D."/>
            <person name="Mansfield J.W."/>
            <person name="Collmer A."/>
            <person name="Buell R."/>
        </authorList>
    </citation>
    <scope>NUCLEOTIDE SEQUENCE [LARGE SCALE GENOMIC DNA]</scope>
    <source>
        <strain>1448A / Race 6</strain>
    </source>
</reference>
<proteinExistence type="inferred from homology"/>
<gene>
    <name evidence="1" type="primary">hisS</name>
    <name type="ordered locus">PSPPH_1321</name>
</gene>